<comment type="function">
    <text evidence="1">Specific inhibitor of cysteine proteinases. Probably involved in the regulation of endogenous processes and in defense against pests and pathogens (By similarity).</text>
</comment>
<comment type="subcellular location">
    <subcellularLocation>
        <location evidence="3">Secreted</location>
    </subcellularLocation>
</comment>
<comment type="similarity">
    <text evidence="3">Belongs to the cystatin family. Phytocystatin subfamily.</text>
</comment>
<comment type="sequence caution" evidence="3">
    <conflict type="erroneous initiation">
        <sequence resource="EMBL-CDS" id="AAM64985"/>
    </conflict>
</comment>
<feature type="signal peptide" evidence="2">
    <location>
        <begin position="1"/>
        <end position="27"/>
    </location>
</feature>
<feature type="chain" id="PRO_0000277494" description="Cysteine proteinase inhibitor 2">
    <location>
        <begin position="28"/>
        <end position="147"/>
    </location>
</feature>
<feature type="domain" description="Cystatin">
    <location>
        <begin position="87"/>
        <end position="117"/>
    </location>
</feature>
<feature type="short sequence motif" description="Secondary area of contact" evidence="1">
    <location>
        <begin position="98"/>
        <end position="102"/>
    </location>
</feature>
<feature type="site" description="Reactive site" evidence="1">
    <location>
        <position position="37"/>
    </location>
</feature>
<feature type="glycosylation site" description="N-linked (GlcNAc...) asparagine" evidence="2">
    <location>
        <position position="115"/>
    </location>
</feature>
<name>CYT2_ARATH</name>
<keyword id="KW-0325">Glycoprotein</keyword>
<keyword id="KW-0611">Plant defense</keyword>
<keyword id="KW-0646">Protease inhibitor</keyword>
<keyword id="KW-1185">Reference proteome</keyword>
<keyword id="KW-0964">Secreted</keyword>
<keyword id="KW-0732">Signal</keyword>
<keyword id="KW-0789">Thiol protease inhibitor</keyword>
<dbReference type="EMBL" id="AC006223">
    <property type="protein sequence ID" value="AAD15406.1"/>
    <property type="molecule type" value="Genomic_DNA"/>
</dbReference>
<dbReference type="EMBL" id="CP002685">
    <property type="protein sequence ID" value="AEC08615.1"/>
    <property type="molecule type" value="Genomic_DNA"/>
</dbReference>
<dbReference type="EMBL" id="AK229242">
    <property type="protein sequence ID" value="BAF01107.1"/>
    <property type="molecule type" value="mRNA"/>
</dbReference>
<dbReference type="EMBL" id="AY087439">
    <property type="protein sequence ID" value="AAM64985.1"/>
    <property type="status" value="ALT_INIT"/>
    <property type="molecule type" value="mRNA"/>
</dbReference>
<dbReference type="PIR" id="E84727">
    <property type="entry name" value="E84727"/>
</dbReference>
<dbReference type="RefSeq" id="NP_180758.1">
    <property type="nucleotide sequence ID" value="NM_128758.4"/>
</dbReference>
<dbReference type="SMR" id="Q8L5T9"/>
<dbReference type="FunCoup" id="Q8L5T9">
    <property type="interactions" value="1"/>
</dbReference>
<dbReference type="STRING" id="3702.Q8L5T9"/>
<dbReference type="MEROPS" id="I25.062"/>
<dbReference type="GlyCosmos" id="Q8L5T9">
    <property type="glycosylation" value="1 site, No reported glycans"/>
</dbReference>
<dbReference type="GlyGen" id="Q8L5T9">
    <property type="glycosylation" value="1 site"/>
</dbReference>
<dbReference type="PaxDb" id="3702-AT2G31980.1"/>
<dbReference type="ProteomicsDB" id="222751"/>
<dbReference type="EnsemblPlants" id="AT2G31980.1">
    <property type="protein sequence ID" value="AT2G31980.1"/>
    <property type="gene ID" value="AT2G31980"/>
</dbReference>
<dbReference type="GeneID" id="817757"/>
<dbReference type="Gramene" id="AT2G31980.1">
    <property type="protein sequence ID" value="AT2G31980.1"/>
    <property type="gene ID" value="AT2G31980"/>
</dbReference>
<dbReference type="KEGG" id="ath:AT2G31980"/>
<dbReference type="Araport" id="AT2G31980"/>
<dbReference type="TAIR" id="AT2G31980">
    <property type="gene designation" value="CYS2"/>
</dbReference>
<dbReference type="eggNOG" id="ENOG502S4YZ">
    <property type="taxonomic scope" value="Eukaryota"/>
</dbReference>
<dbReference type="HOGENOM" id="CLU_113093_0_0_1"/>
<dbReference type="InParanoid" id="Q8L5T9"/>
<dbReference type="OMA" id="HRGIHKM"/>
<dbReference type="OrthoDB" id="1908104at2759"/>
<dbReference type="PhylomeDB" id="Q8L5T9"/>
<dbReference type="PRO" id="PR:Q8L5T9"/>
<dbReference type="Proteomes" id="UP000006548">
    <property type="component" value="Chromosome 2"/>
</dbReference>
<dbReference type="ExpressionAtlas" id="Q8L5T9">
    <property type="expression patterns" value="baseline and differential"/>
</dbReference>
<dbReference type="GO" id="GO:0005576">
    <property type="term" value="C:extracellular region"/>
    <property type="evidence" value="ECO:0007669"/>
    <property type="project" value="UniProtKB-SubCell"/>
</dbReference>
<dbReference type="GO" id="GO:0004869">
    <property type="term" value="F:cysteine-type endopeptidase inhibitor activity"/>
    <property type="evidence" value="ECO:0007669"/>
    <property type="project" value="UniProtKB-KW"/>
</dbReference>
<dbReference type="GO" id="GO:0006952">
    <property type="term" value="P:defense response"/>
    <property type="evidence" value="ECO:0007669"/>
    <property type="project" value="UniProtKB-KW"/>
</dbReference>
<dbReference type="CDD" id="cd00042">
    <property type="entry name" value="CY"/>
    <property type="match status" value="1"/>
</dbReference>
<dbReference type="Gene3D" id="3.10.450.10">
    <property type="match status" value="1"/>
</dbReference>
<dbReference type="InterPro" id="IPR000010">
    <property type="entry name" value="Cystatin_dom"/>
</dbReference>
<dbReference type="InterPro" id="IPR046350">
    <property type="entry name" value="Cystatin_sf"/>
</dbReference>
<dbReference type="InterPro" id="IPR018073">
    <property type="entry name" value="Prot_inh_cystat_CS"/>
</dbReference>
<dbReference type="PANTHER" id="PTHR47373">
    <property type="entry name" value="CYSTEINE PROTEINASE INHIBITOR 2"/>
    <property type="match status" value="1"/>
</dbReference>
<dbReference type="PANTHER" id="PTHR47373:SF1">
    <property type="entry name" value="CYSTEINE PROTEINASE INHIBITOR 2"/>
    <property type="match status" value="1"/>
</dbReference>
<dbReference type="Pfam" id="PF16845">
    <property type="entry name" value="SQAPI"/>
    <property type="match status" value="1"/>
</dbReference>
<dbReference type="SMART" id="SM00043">
    <property type="entry name" value="CY"/>
    <property type="match status" value="1"/>
</dbReference>
<dbReference type="SUPFAM" id="SSF54403">
    <property type="entry name" value="Cystatin/monellin"/>
    <property type="match status" value="1"/>
</dbReference>
<dbReference type="PROSITE" id="PS00287">
    <property type="entry name" value="CYSTATIN"/>
    <property type="match status" value="1"/>
</dbReference>
<reference key="1">
    <citation type="journal article" date="1999" name="Nature">
        <title>Sequence and analysis of chromosome 2 of the plant Arabidopsis thaliana.</title>
        <authorList>
            <person name="Lin X."/>
            <person name="Kaul S."/>
            <person name="Rounsley S.D."/>
            <person name="Shea T.P."/>
            <person name="Benito M.-I."/>
            <person name="Town C.D."/>
            <person name="Fujii C.Y."/>
            <person name="Mason T.M."/>
            <person name="Bowman C.L."/>
            <person name="Barnstead M.E."/>
            <person name="Feldblyum T.V."/>
            <person name="Buell C.R."/>
            <person name="Ketchum K.A."/>
            <person name="Lee J.J."/>
            <person name="Ronning C.M."/>
            <person name="Koo H.L."/>
            <person name="Moffat K.S."/>
            <person name="Cronin L.A."/>
            <person name="Shen M."/>
            <person name="Pai G."/>
            <person name="Van Aken S."/>
            <person name="Umayam L."/>
            <person name="Tallon L.J."/>
            <person name="Gill J.E."/>
            <person name="Adams M.D."/>
            <person name="Carrera A.J."/>
            <person name="Creasy T.H."/>
            <person name="Goodman H.M."/>
            <person name="Somerville C.R."/>
            <person name="Copenhaver G.P."/>
            <person name="Preuss D."/>
            <person name="Nierman W.C."/>
            <person name="White O."/>
            <person name="Eisen J.A."/>
            <person name="Salzberg S.L."/>
            <person name="Fraser C.M."/>
            <person name="Venter J.C."/>
        </authorList>
    </citation>
    <scope>NUCLEOTIDE SEQUENCE [LARGE SCALE GENOMIC DNA]</scope>
    <source>
        <strain>cv. Columbia</strain>
    </source>
</reference>
<reference key="2">
    <citation type="journal article" date="2017" name="Plant J.">
        <title>Araport11: a complete reannotation of the Arabidopsis thaliana reference genome.</title>
        <authorList>
            <person name="Cheng C.Y."/>
            <person name="Krishnakumar V."/>
            <person name="Chan A.P."/>
            <person name="Thibaud-Nissen F."/>
            <person name="Schobel S."/>
            <person name="Town C.D."/>
        </authorList>
    </citation>
    <scope>GENOME REANNOTATION</scope>
    <source>
        <strain>cv. Columbia</strain>
    </source>
</reference>
<reference key="3">
    <citation type="submission" date="2006-07" db="EMBL/GenBank/DDBJ databases">
        <title>Large-scale analysis of RIKEN Arabidopsis full-length (RAFL) cDNAs.</title>
        <authorList>
            <person name="Totoki Y."/>
            <person name="Seki M."/>
            <person name="Ishida J."/>
            <person name="Nakajima M."/>
            <person name="Enju A."/>
            <person name="Kamiya A."/>
            <person name="Narusaka M."/>
            <person name="Shin-i T."/>
            <person name="Nakagawa M."/>
            <person name="Sakamoto N."/>
            <person name="Oishi K."/>
            <person name="Kohara Y."/>
            <person name="Kobayashi M."/>
            <person name="Toyoda A."/>
            <person name="Sakaki Y."/>
            <person name="Sakurai T."/>
            <person name="Iida K."/>
            <person name="Akiyama K."/>
            <person name="Satou M."/>
            <person name="Toyoda T."/>
            <person name="Konagaya A."/>
            <person name="Carninci P."/>
            <person name="Kawai J."/>
            <person name="Hayashizaki Y."/>
            <person name="Shinozaki K."/>
        </authorList>
    </citation>
    <scope>NUCLEOTIDE SEQUENCE [LARGE SCALE MRNA]</scope>
    <source>
        <strain>cv. Columbia</strain>
    </source>
</reference>
<reference key="4">
    <citation type="submission" date="2002-03" db="EMBL/GenBank/DDBJ databases">
        <title>Full-length cDNA from Arabidopsis thaliana.</title>
        <authorList>
            <person name="Brover V.V."/>
            <person name="Troukhan M.E."/>
            <person name="Alexandrov N.A."/>
            <person name="Lu Y.-P."/>
            <person name="Flavell R.B."/>
            <person name="Feldmann K.A."/>
        </authorList>
    </citation>
    <scope>NUCLEOTIDE SEQUENCE [LARGE SCALE MRNA]</scope>
</reference>
<reference key="5">
    <citation type="journal article" date="2005" name="Mol. Genet. Genomics">
        <title>Comparative phylogenetic analysis of cystatin gene families from arabidopsis, rice and barley.</title>
        <authorList>
            <person name="Martinez M."/>
            <person name="Abraham Z."/>
            <person name="Carbonero P."/>
            <person name="Diaz I."/>
        </authorList>
    </citation>
    <scope>GENE FAMILY</scope>
</reference>
<proteinExistence type="evidence at transcript level"/>
<accession>Q8L5T9</accession>
<accession>Q9SL01</accession>
<organism>
    <name type="scientific">Arabidopsis thaliana</name>
    <name type="common">Mouse-ear cress</name>
    <dbReference type="NCBI Taxonomy" id="3702"/>
    <lineage>
        <taxon>Eukaryota</taxon>
        <taxon>Viridiplantae</taxon>
        <taxon>Streptophyta</taxon>
        <taxon>Embryophyta</taxon>
        <taxon>Tracheophyta</taxon>
        <taxon>Spermatophyta</taxon>
        <taxon>Magnoliopsida</taxon>
        <taxon>eudicotyledons</taxon>
        <taxon>Gunneridae</taxon>
        <taxon>Pentapetalae</taxon>
        <taxon>rosids</taxon>
        <taxon>malvids</taxon>
        <taxon>Brassicales</taxon>
        <taxon>Brassicaceae</taxon>
        <taxon>Camelineae</taxon>
        <taxon>Arabidopsis</taxon>
    </lineage>
</organism>
<protein>
    <recommendedName>
        <fullName>Cysteine proteinase inhibitor 2</fullName>
        <shortName>AtCYS-2</shortName>
    </recommendedName>
</protein>
<evidence type="ECO:0000250" key="1"/>
<evidence type="ECO:0000255" key="2"/>
<evidence type="ECO:0000305" key="3"/>
<sequence length="147" mass="16090">MATMLKVSLVLSLLGFLVIAVVTPSAANPFRKSVVLGGKSGVPNIRTNREIQQLGRYCVEQFNQQAQNEQGNIGSIAKTDTAISNPLQFSRVVSAQKQVVAGLKYYLRIEVTQPNGSTRMFDSVVVIQPWLHSKQLLGFTPVVSPVY</sequence>
<gene>
    <name type="primary">CYS2</name>
    <name type="ordered locus">At2g31980</name>
    <name type="ORF">F22D22.27</name>
</gene>